<reference key="1">
    <citation type="journal article" date="1995" name="Mol. Endocrinol.">
        <title>Two classes of proteins dependent on either the presence or absence of thyroid hormone for interaction with the thyroid hormone receptor.</title>
        <authorList>
            <person name="Lee J.W."/>
            <person name="Choi H.-S."/>
            <person name="Gyuris J."/>
            <person name="Brent R."/>
            <person name="Moore D.D."/>
        </authorList>
    </citation>
    <scope>NUCLEOTIDE SEQUENCE [GENOMIC DNA]</scope>
    <scope>ALTERNATIVE SPLICING (ISOFORM 2)</scope>
    <scope>INTERACTION WITH THRB</scope>
    <source>
        <tissue>Cervix carcinoma</tissue>
    </source>
</reference>
<reference key="2">
    <citation type="submission" date="2003-05" db="EMBL/GenBank/DDBJ databases">
        <title>Cloning of human full-length CDSs in BD Creator(TM) system donor vector.</title>
        <authorList>
            <person name="Kalnine N."/>
            <person name="Chen X."/>
            <person name="Rolfs A."/>
            <person name="Halleck A."/>
            <person name="Hines L."/>
            <person name="Eisenstein S."/>
            <person name="Koundinya M."/>
            <person name="Raphael J."/>
            <person name="Moreira D."/>
            <person name="Kelley T."/>
            <person name="LaBaer J."/>
            <person name="Lin Y."/>
            <person name="Phelan M."/>
            <person name="Farmer A."/>
        </authorList>
    </citation>
    <scope>NUCLEOTIDE SEQUENCE [LARGE SCALE MRNA] (ISOFORM 1)</scope>
</reference>
<reference key="3">
    <citation type="submission" date="2004-08" db="EMBL/GenBank/DDBJ databases">
        <authorList>
            <consortium name="SeattleSNPs variation discovery resource"/>
        </authorList>
    </citation>
    <scope>NUCLEOTIDE SEQUENCE [GENOMIC DNA]</scope>
    <scope>VARIANT TRP-339</scope>
</reference>
<reference key="4">
    <citation type="journal article" date="2004" name="Nat. Genet.">
        <title>Complete sequencing and characterization of 21,243 full-length human cDNAs.</title>
        <authorList>
            <person name="Ota T."/>
            <person name="Suzuki Y."/>
            <person name="Nishikawa T."/>
            <person name="Otsuki T."/>
            <person name="Sugiyama T."/>
            <person name="Irie R."/>
            <person name="Wakamatsu A."/>
            <person name="Hayashi K."/>
            <person name="Sato H."/>
            <person name="Nagai K."/>
            <person name="Kimura K."/>
            <person name="Makita H."/>
            <person name="Sekine M."/>
            <person name="Obayashi M."/>
            <person name="Nishi T."/>
            <person name="Shibahara T."/>
            <person name="Tanaka T."/>
            <person name="Ishii S."/>
            <person name="Yamamoto J."/>
            <person name="Saito K."/>
            <person name="Kawai Y."/>
            <person name="Isono Y."/>
            <person name="Nakamura Y."/>
            <person name="Nagahari K."/>
            <person name="Murakami K."/>
            <person name="Yasuda T."/>
            <person name="Iwayanagi T."/>
            <person name="Wagatsuma M."/>
            <person name="Shiratori A."/>
            <person name="Sudo H."/>
            <person name="Hosoiri T."/>
            <person name="Kaku Y."/>
            <person name="Kodaira H."/>
            <person name="Kondo H."/>
            <person name="Sugawara M."/>
            <person name="Takahashi M."/>
            <person name="Kanda K."/>
            <person name="Yokoi T."/>
            <person name="Furuya T."/>
            <person name="Kikkawa E."/>
            <person name="Omura Y."/>
            <person name="Abe K."/>
            <person name="Kamihara K."/>
            <person name="Katsuta N."/>
            <person name="Sato K."/>
            <person name="Tanikawa M."/>
            <person name="Yamazaki M."/>
            <person name="Ninomiya K."/>
            <person name="Ishibashi T."/>
            <person name="Yamashita H."/>
            <person name="Murakawa K."/>
            <person name="Fujimori K."/>
            <person name="Tanai H."/>
            <person name="Kimata M."/>
            <person name="Watanabe M."/>
            <person name="Hiraoka S."/>
            <person name="Chiba Y."/>
            <person name="Ishida S."/>
            <person name="Ono Y."/>
            <person name="Takiguchi S."/>
            <person name="Watanabe S."/>
            <person name="Yosida M."/>
            <person name="Hotuta T."/>
            <person name="Kusano J."/>
            <person name="Kanehori K."/>
            <person name="Takahashi-Fujii A."/>
            <person name="Hara H."/>
            <person name="Tanase T.-O."/>
            <person name="Nomura Y."/>
            <person name="Togiya S."/>
            <person name="Komai F."/>
            <person name="Hara R."/>
            <person name="Takeuchi K."/>
            <person name="Arita M."/>
            <person name="Imose N."/>
            <person name="Musashino K."/>
            <person name="Yuuki H."/>
            <person name="Oshima A."/>
            <person name="Sasaki N."/>
            <person name="Aotsuka S."/>
            <person name="Yoshikawa Y."/>
            <person name="Matsunawa H."/>
            <person name="Ichihara T."/>
            <person name="Shiohata N."/>
            <person name="Sano S."/>
            <person name="Moriya S."/>
            <person name="Momiyama H."/>
            <person name="Satoh N."/>
            <person name="Takami S."/>
            <person name="Terashima Y."/>
            <person name="Suzuki O."/>
            <person name="Nakagawa S."/>
            <person name="Senoh A."/>
            <person name="Mizoguchi H."/>
            <person name="Goto Y."/>
            <person name="Shimizu F."/>
            <person name="Wakebe H."/>
            <person name="Hishigaki H."/>
            <person name="Watanabe T."/>
            <person name="Sugiyama A."/>
            <person name="Takemoto M."/>
            <person name="Kawakami B."/>
            <person name="Yamazaki M."/>
            <person name="Watanabe K."/>
            <person name="Kumagai A."/>
            <person name="Itakura S."/>
            <person name="Fukuzumi Y."/>
            <person name="Fujimori Y."/>
            <person name="Komiyama M."/>
            <person name="Tashiro H."/>
            <person name="Tanigami A."/>
            <person name="Fujiwara T."/>
            <person name="Ono T."/>
            <person name="Yamada K."/>
            <person name="Fujii Y."/>
            <person name="Ozaki K."/>
            <person name="Hirao M."/>
            <person name="Ohmori Y."/>
            <person name="Kawabata A."/>
            <person name="Hikiji T."/>
            <person name="Kobatake N."/>
            <person name="Inagaki H."/>
            <person name="Ikema Y."/>
            <person name="Okamoto S."/>
            <person name="Okitani R."/>
            <person name="Kawakami T."/>
            <person name="Noguchi S."/>
            <person name="Itoh T."/>
            <person name="Shigeta K."/>
            <person name="Senba T."/>
            <person name="Matsumura K."/>
            <person name="Nakajima Y."/>
            <person name="Mizuno T."/>
            <person name="Morinaga M."/>
            <person name="Sasaki M."/>
            <person name="Togashi T."/>
            <person name="Oyama M."/>
            <person name="Hata H."/>
            <person name="Watanabe M."/>
            <person name="Komatsu T."/>
            <person name="Mizushima-Sugano J."/>
            <person name="Satoh T."/>
            <person name="Shirai Y."/>
            <person name="Takahashi Y."/>
            <person name="Nakagawa K."/>
            <person name="Okumura K."/>
            <person name="Nagase T."/>
            <person name="Nomura N."/>
            <person name="Kikuchi H."/>
            <person name="Masuho Y."/>
            <person name="Yamashita R."/>
            <person name="Nakai K."/>
            <person name="Yada T."/>
            <person name="Nakamura Y."/>
            <person name="Ohara O."/>
            <person name="Isogai T."/>
            <person name="Sugano S."/>
        </authorList>
    </citation>
    <scope>NUCLEOTIDE SEQUENCE [LARGE SCALE MRNA] (ISOFORM 2)</scope>
    <source>
        <tissue>Lung</tissue>
    </source>
</reference>
<reference key="5">
    <citation type="submission" date="2005-07" db="EMBL/GenBank/DDBJ databases">
        <authorList>
            <person name="Mural R.J."/>
            <person name="Istrail S."/>
            <person name="Sutton G.G."/>
            <person name="Florea L."/>
            <person name="Halpern A.L."/>
            <person name="Mobarry C.M."/>
            <person name="Lippert R."/>
            <person name="Walenz B."/>
            <person name="Shatkay H."/>
            <person name="Dew I."/>
            <person name="Miller J.R."/>
            <person name="Flanigan M.J."/>
            <person name="Edwards N.J."/>
            <person name="Bolanos R."/>
            <person name="Fasulo D."/>
            <person name="Halldorsson B.V."/>
            <person name="Hannenhalli S."/>
            <person name="Turner R."/>
            <person name="Yooseph S."/>
            <person name="Lu F."/>
            <person name="Nusskern D.R."/>
            <person name="Shue B.C."/>
            <person name="Zheng X.H."/>
            <person name="Zhong F."/>
            <person name="Delcher A.L."/>
            <person name="Huson D.H."/>
            <person name="Kravitz S.A."/>
            <person name="Mouchard L."/>
            <person name="Reinert K."/>
            <person name="Remington K.A."/>
            <person name="Clark A.G."/>
            <person name="Waterman M.S."/>
            <person name="Eichler E.E."/>
            <person name="Adams M.D."/>
            <person name="Hunkapiller M.W."/>
            <person name="Myers E.W."/>
            <person name="Venter J.C."/>
        </authorList>
    </citation>
    <scope>NUCLEOTIDE SEQUENCE [LARGE SCALE GENOMIC DNA]</scope>
</reference>
<reference key="6">
    <citation type="journal article" date="2004" name="Genome Res.">
        <title>The status, quality, and expansion of the NIH full-length cDNA project: the Mammalian Gene Collection (MGC).</title>
        <authorList>
            <consortium name="The MGC Project Team"/>
        </authorList>
    </citation>
    <scope>NUCLEOTIDE SEQUENCE [LARGE SCALE MRNA] (ISOFORM 1)</scope>
    <scope>NUCLEOTIDE SEQUENCE [LARGE SCALE MRNA] OF 100-338 (ISOFORM 2)</scope>
    <source>
        <tissue>Pancreas</tissue>
        <tissue>Uterus</tissue>
    </source>
</reference>
<reference key="7">
    <citation type="journal article" date="1996" name="Mol. Cell. Biol.">
        <title>Role of unphosphorylated, newly synthesized IkappaB beta in persistent activation of NF-kappaB.</title>
        <authorList>
            <person name="Suyang H."/>
            <person name="Phillips R.J."/>
            <person name="Douglas I."/>
            <person name="Ghosh S."/>
        </authorList>
    </citation>
    <scope>CHARACTERIZATION</scope>
</reference>
<reference key="8">
    <citation type="journal article" date="2000" name="Science">
        <title>A subclass of Ras proteins that regulate the degradation of IkappaB.</title>
        <authorList>
            <person name="Fenwick C."/>
            <person name="Na S.-Y."/>
            <person name="Voll R.E."/>
            <person name="Zhong H."/>
            <person name="Im S.-Y."/>
            <person name="Lee J.W."/>
            <person name="Ghosh S."/>
        </authorList>
    </citation>
    <scope>INTERACTION WITH NKIRAS1 AND NKIRAS2</scope>
</reference>
<reference key="9">
    <citation type="journal article" date="1996" name="Mol. Cell. Biol.">
        <title>Mapping of the inducible IkappaB phosphorylation sites that signal its ubiquitination and degradation.</title>
        <authorList>
            <person name="DiDonato J.A."/>
            <person name="Mercurio F."/>
            <person name="Rosette C."/>
            <person name="Wu-Li J."/>
            <person name="Suyang H."/>
            <person name="Ghosh S."/>
            <person name="Karin M."/>
        </authorList>
    </citation>
    <scope>MUTAGENESIS OF SER-19 AND SER-23</scope>
    <scope>PHOSPHORYLATION AT SER-19 AND SER-23</scope>
</reference>
<reference key="10">
    <citation type="journal article" date="1996" name="Mol. Cell. Biol.">
        <title>Basal phosphorylation of the PEST domain in the I(kappa)B(beta) regulates its functional interaction with the c-rel proto-oncogene product.</title>
        <authorList>
            <person name="Chu Z.L."/>
            <person name="McKinsey T.A."/>
            <person name="Liu L."/>
            <person name="Qi X."/>
            <person name="Ballard D.W."/>
        </authorList>
    </citation>
    <scope>PHOSPHORYLATION AT SER-313 AND SER-315</scope>
</reference>
<reference key="11">
    <citation type="journal article" date="2003" name="J. Biol. Chem.">
        <title>KappaB-Ras binds to the unique insert within the ankyrin repeat domain of IkappaBbeta and regulates cytoplasmic retention of IkappaBbeta.NF-kappaB complexes.</title>
        <authorList>
            <person name="Chen Y."/>
            <person name="Wu J."/>
            <person name="Ghosh G."/>
        </authorList>
    </citation>
    <scope>INTERACTION WITH NKIRAS1</scope>
</reference>
<reference key="12">
    <citation type="journal article" date="2004" name="Mol. Cell. Biol.">
        <title>Inhibition of NF-kappaB activity by IkappaBbeta in association with kappaB-Ras.</title>
        <authorList>
            <person name="Chen Y."/>
            <person name="Vallee S."/>
            <person name="Wu J."/>
            <person name="Vu D."/>
            <person name="Sondek J."/>
            <person name="Ghosh G."/>
        </authorList>
    </citation>
    <scope>INTERACTION WITH NKIRAS1</scope>
</reference>
<reference key="13">
    <citation type="journal article" date="2006" name="Biochem. J.">
        <title>Characterization of COMMD protein-protein interactions in NF-kappaB signalling.</title>
        <authorList>
            <person name="de Bie P."/>
            <person name="van de Sluis B."/>
            <person name="Burstein E."/>
            <person name="Duran K.J."/>
            <person name="Berger R."/>
            <person name="Duckett C.S."/>
            <person name="Wijmenga C."/>
            <person name="Klomp L.W."/>
        </authorList>
    </citation>
    <scope>INTERACTION WITH COMMD1</scope>
</reference>
<reference key="14">
    <citation type="journal article" date="2014" name="J. Proteomics">
        <title>An enzyme assisted RP-RPLC approach for in-depth analysis of human liver phosphoproteome.</title>
        <authorList>
            <person name="Bian Y."/>
            <person name="Song C."/>
            <person name="Cheng K."/>
            <person name="Dong M."/>
            <person name="Wang F."/>
            <person name="Huang J."/>
            <person name="Sun D."/>
            <person name="Wang L."/>
            <person name="Ye M."/>
            <person name="Zou H."/>
        </authorList>
    </citation>
    <scope>PHOSPHORYLATION [LARGE SCALE ANALYSIS] AT SER-183</scope>
    <scope>IDENTIFICATION BY MASS SPECTROMETRY [LARGE SCALE ANALYSIS]</scope>
    <source>
        <tissue>Liver</tissue>
    </source>
</reference>
<evidence type="ECO:0000250" key="1"/>
<evidence type="ECO:0000256" key="2">
    <source>
        <dbReference type="SAM" id="MobiDB-lite"/>
    </source>
</evidence>
<evidence type="ECO:0000269" key="3">
    <source>
    </source>
</evidence>
<evidence type="ECO:0000269" key="4">
    <source>
    </source>
</evidence>
<evidence type="ECO:0000269" key="5">
    <source>
    </source>
</evidence>
<evidence type="ECO:0000269" key="6">
    <source>
    </source>
</evidence>
<evidence type="ECO:0000269" key="7">
    <source>
    </source>
</evidence>
<evidence type="ECO:0000269" key="8">
    <source>
    </source>
</evidence>
<evidence type="ECO:0000269" key="9">
    <source>
    </source>
</evidence>
<evidence type="ECO:0000269" key="10">
    <source ref="3"/>
</evidence>
<evidence type="ECO:0000303" key="11">
    <source>
    </source>
</evidence>
<evidence type="ECO:0000303" key="12">
    <source>
    </source>
</evidence>
<evidence type="ECO:0000305" key="13"/>
<evidence type="ECO:0007744" key="14">
    <source>
    </source>
</evidence>
<proteinExistence type="evidence at protein level"/>
<organism>
    <name type="scientific">Homo sapiens</name>
    <name type="common">Human</name>
    <dbReference type="NCBI Taxonomy" id="9606"/>
    <lineage>
        <taxon>Eukaryota</taxon>
        <taxon>Metazoa</taxon>
        <taxon>Chordata</taxon>
        <taxon>Craniata</taxon>
        <taxon>Vertebrata</taxon>
        <taxon>Euteleostomi</taxon>
        <taxon>Mammalia</taxon>
        <taxon>Eutheria</taxon>
        <taxon>Euarchontoglires</taxon>
        <taxon>Primates</taxon>
        <taxon>Haplorrhini</taxon>
        <taxon>Catarrhini</taxon>
        <taxon>Hominidae</taxon>
        <taxon>Homo</taxon>
    </lineage>
</organism>
<feature type="chain" id="PRO_0000067004" description="NF-kappa-B inhibitor beta">
    <location>
        <begin position="1"/>
        <end position="356"/>
    </location>
</feature>
<feature type="repeat" description="ANK 1">
    <location>
        <begin position="57"/>
        <end position="86"/>
    </location>
</feature>
<feature type="repeat" description="ANK 2">
    <location>
        <begin position="93"/>
        <end position="122"/>
    </location>
</feature>
<feature type="repeat" description="ANK 3">
    <location>
        <begin position="126"/>
        <end position="155"/>
    </location>
</feature>
<feature type="repeat" description="ANK 4">
    <location>
        <begin position="206"/>
        <end position="235"/>
    </location>
</feature>
<feature type="repeat" description="ANK 5">
    <location>
        <begin position="240"/>
        <end position="269"/>
    </location>
</feature>
<feature type="repeat" description="ANK 6">
    <location>
        <begin position="273"/>
        <end position="302"/>
    </location>
</feature>
<feature type="region of interest" description="Disordered" evidence="2">
    <location>
        <begin position="149"/>
        <end position="193"/>
    </location>
</feature>
<feature type="region of interest" description="Disordered" evidence="2">
    <location>
        <begin position="298"/>
        <end position="356"/>
    </location>
</feature>
<feature type="compositionally biased region" description="Acidic residues" evidence="2">
    <location>
        <begin position="183"/>
        <end position="193"/>
    </location>
</feature>
<feature type="compositionally biased region" description="Acidic residues" evidence="2">
    <location>
        <begin position="318"/>
        <end position="328"/>
    </location>
</feature>
<feature type="modified residue" description="Phosphoserine; by RPS6KA1" evidence="8">
    <location>
        <position position="19"/>
    </location>
</feature>
<feature type="modified residue" description="Phosphoserine; by RPS6KA1" evidence="8">
    <location>
        <position position="23"/>
    </location>
</feature>
<feature type="modified residue" description="Phosphoserine" evidence="14">
    <location>
        <position position="183"/>
    </location>
</feature>
<feature type="modified residue" description="Phosphoserine; by CK2" evidence="9">
    <location>
        <position position="313"/>
    </location>
</feature>
<feature type="modified residue" description="Phosphoserine; by CK2" evidence="9">
    <location>
        <position position="315"/>
    </location>
</feature>
<feature type="splice variant" id="VSP_012409" description="In isoform 2." evidence="11 12">
    <original>DEYDDIVVHSSRSQT</original>
    <variation>VSQEERQGSPAGGSG</variation>
    <location>
        <begin position="324"/>
        <end position="338"/>
    </location>
</feature>
<feature type="splice variant" id="VSP_012410" description="In isoform 2." evidence="11 12">
    <location>
        <begin position="339"/>
        <end position="356"/>
    </location>
</feature>
<feature type="sequence variant" id="VAR_020771" description="In dbSNP:rs17886215." evidence="10">
    <original>R</original>
    <variation>W</variation>
    <location>
        <position position="339"/>
    </location>
</feature>
<feature type="mutagenesis site" description="No degradation; when associated with A-23." evidence="8">
    <original>S</original>
    <variation>A</variation>
    <location>
        <position position="19"/>
    </location>
</feature>
<feature type="mutagenesis site" description="No degradation; when associated with A-19." evidence="8">
    <original>S</original>
    <variation>A</variation>
    <location>
        <position position="23"/>
    </location>
</feature>
<feature type="sequence conflict" description="In Ref. 1; AAC41742." evidence="13" ref="1">
    <original>S</original>
    <variation>T</variation>
    <location>
        <position position="19"/>
    </location>
</feature>
<feature type="sequence conflict" description="In Ref. 1; AAC41742." evidence="13" ref="1">
    <original>S</original>
    <variation>G</variation>
    <location>
        <position position="319"/>
    </location>
</feature>
<accession>Q15653</accession>
<accession>A8K3F4</accession>
<accession>Q96BJ7</accession>
<dbReference type="EMBL" id="L40407">
    <property type="protein sequence ID" value="AAC41742.1"/>
    <property type="molecule type" value="Genomic_DNA"/>
</dbReference>
<dbReference type="EMBL" id="BT006743">
    <property type="protein sequence ID" value="AAP35389.1"/>
    <property type="molecule type" value="mRNA"/>
</dbReference>
<dbReference type="EMBL" id="AY736284">
    <property type="protein sequence ID" value="AAU10088.1"/>
    <property type="molecule type" value="Genomic_DNA"/>
</dbReference>
<dbReference type="EMBL" id="AK290569">
    <property type="protein sequence ID" value="BAF83258.1"/>
    <property type="molecule type" value="mRNA"/>
</dbReference>
<dbReference type="EMBL" id="CH471126">
    <property type="protein sequence ID" value="EAW56843.1"/>
    <property type="molecule type" value="Genomic_DNA"/>
</dbReference>
<dbReference type="EMBL" id="BC007197">
    <property type="protein sequence ID" value="AAH07197.1"/>
    <property type="molecule type" value="mRNA"/>
</dbReference>
<dbReference type="EMBL" id="BC015528">
    <property type="protein sequence ID" value="AAH15528.1"/>
    <property type="molecule type" value="mRNA"/>
</dbReference>
<dbReference type="CCDS" id="CCDS12524.1">
    <molecule id="Q15653-1"/>
</dbReference>
<dbReference type="CCDS" id="CCDS92612.1">
    <molecule id="Q15653-2"/>
</dbReference>
<dbReference type="RefSeq" id="NP_001230045.1">
    <property type="nucleotide sequence ID" value="NM_001243116.1"/>
</dbReference>
<dbReference type="RefSeq" id="NP_001356628.1">
    <molecule id="Q15653-2"/>
    <property type="nucleotide sequence ID" value="NM_001369699.1"/>
</dbReference>
<dbReference type="RefSeq" id="NP_002494.2">
    <molecule id="Q15653-1"/>
    <property type="nucleotide sequence ID" value="NM_002503.4"/>
</dbReference>
<dbReference type="PDB" id="9CK0">
    <property type="method" value="X-ray"/>
    <property type="resolution" value="2.60 A"/>
    <property type="chains" value="B=277-299"/>
</dbReference>
<dbReference type="PDBsum" id="9CK0"/>
<dbReference type="SMR" id="Q15653"/>
<dbReference type="BioGRID" id="110860">
    <property type="interactions" value="87"/>
</dbReference>
<dbReference type="CORUM" id="Q15653"/>
<dbReference type="DIP" id="DIP-27532N"/>
<dbReference type="ELM" id="Q15653"/>
<dbReference type="FunCoup" id="Q15653">
    <property type="interactions" value="1123"/>
</dbReference>
<dbReference type="IntAct" id="Q15653">
    <property type="interactions" value="55"/>
</dbReference>
<dbReference type="STRING" id="9606.ENSP00000312988"/>
<dbReference type="GlyGen" id="Q15653">
    <property type="glycosylation" value="1 site"/>
</dbReference>
<dbReference type="iPTMnet" id="Q15653"/>
<dbReference type="PhosphoSitePlus" id="Q15653"/>
<dbReference type="BioMuta" id="NFKBIB"/>
<dbReference type="DMDM" id="57015399"/>
<dbReference type="jPOST" id="Q15653"/>
<dbReference type="MassIVE" id="Q15653"/>
<dbReference type="PaxDb" id="9606-ENSP00000312988"/>
<dbReference type="PeptideAtlas" id="Q15653"/>
<dbReference type="ProteomicsDB" id="60694">
    <molecule id="Q15653-1"/>
</dbReference>
<dbReference type="ProteomicsDB" id="60695">
    <molecule id="Q15653-2"/>
</dbReference>
<dbReference type="Pumba" id="Q15653"/>
<dbReference type="Antibodypedia" id="4179">
    <property type="antibodies" value="776 antibodies from 45 providers"/>
</dbReference>
<dbReference type="DNASU" id="4793"/>
<dbReference type="Ensembl" id="ENST00000313582.6">
    <molecule id="Q15653-1"/>
    <property type="protein sequence ID" value="ENSP00000312988.5"/>
    <property type="gene ID" value="ENSG00000104825.17"/>
</dbReference>
<dbReference type="Ensembl" id="ENST00000572515.5">
    <molecule id="Q15653-2"/>
    <property type="protein sequence ID" value="ENSP00000459728.1"/>
    <property type="gene ID" value="ENSG00000104825.17"/>
</dbReference>
<dbReference type="Ensembl" id="ENST00000634647.1">
    <molecule id="Q15653-2"/>
    <property type="protein sequence ID" value="ENSP00000489145.1"/>
    <property type="gene ID" value="ENSG00000282905.2"/>
</dbReference>
<dbReference type="Ensembl" id="ENST00000635517.2">
    <molecule id="Q15653-1"/>
    <property type="protein sequence ID" value="ENSP00000489138.1"/>
    <property type="gene ID" value="ENSG00000282905.2"/>
</dbReference>
<dbReference type="GeneID" id="4793"/>
<dbReference type="KEGG" id="hsa:4793"/>
<dbReference type="MANE-Select" id="ENST00000313582.6">
    <property type="protein sequence ID" value="ENSP00000312988.5"/>
    <property type="RefSeq nucleotide sequence ID" value="NM_002503.5"/>
    <property type="RefSeq protein sequence ID" value="NP_002494.2"/>
</dbReference>
<dbReference type="UCSC" id="uc002ojw.4">
    <molecule id="Q15653-1"/>
    <property type="organism name" value="human"/>
</dbReference>
<dbReference type="AGR" id="HGNC:7798"/>
<dbReference type="CTD" id="4793"/>
<dbReference type="DisGeNET" id="4793"/>
<dbReference type="GeneCards" id="NFKBIB"/>
<dbReference type="HGNC" id="HGNC:7798">
    <property type="gene designation" value="NFKBIB"/>
</dbReference>
<dbReference type="HPA" id="ENSG00000104825">
    <property type="expression patterns" value="Tissue enhanced (testis)"/>
</dbReference>
<dbReference type="MIM" id="604495">
    <property type="type" value="gene"/>
</dbReference>
<dbReference type="neXtProt" id="NX_Q15653"/>
<dbReference type="OpenTargets" id="ENSG00000104825"/>
<dbReference type="PharmGKB" id="PA31602"/>
<dbReference type="VEuPathDB" id="HostDB:ENSG00000104825"/>
<dbReference type="eggNOG" id="KOG0504">
    <property type="taxonomic scope" value="Eukaryota"/>
</dbReference>
<dbReference type="GeneTree" id="ENSGT00940000161595"/>
<dbReference type="HOGENOM" id="CLU_000134_6_0_1"/>
<dbReference type="InParanoid" id="Q15653"/>
<dbReference type="OMA" id="REGWRDC"/>
<dbReference type="OrthoDB" id="20727at2759"/>
<dbReference type="PAN-GO" id="Q15653">
    <property type="GO annotations" value="4 GO annotations based on evolutionary models"/>
</dbReference>
<dbReference type="PhylomeDB" id="Q15653"/>
<dbReference type="TreeFam" id="TF320166"/>
<dbReference type="PathwayCommons" id="Q15653"/>
<dbReference type="Reactome" id="R-HSA-1169091">
    <property type="pathway name" value="Activation of NF-kappaB in B cells"/>
</dbReference>
<dbReference type="Reactome" id="R-HSA-1810476">
    <property type="pathway name" value="RIP-mediated NFkB activation via ZBP1"/>
</dbReference>
<dbReference type="Reactome" id="R-HSA-445989">
    <property type="pathway name" value="TAK1-dependent IKK and NF-kappa-B activation"/>
</dbReference>
<dbReference type="Reactome" id="R-HSA-933542">
    <property type="pathway name" value="TRAF6 mediated NF-kB activation"/>
</dbReference>
<dbReference type="SABIO-RK" id="Q15653"/>
<dbReference type="SignaLink" id="Q15653"/>
<dbReference type="SIGNOR" id="Q15653"/>
<dbReference type="BioGRID-ORCS" id="4793">
    <property type="hits" value="27 hits in 1162 CRISPR screens"/>
</dbReference>
<dbReference type="ChiTaRS" id="NFKBIB">
    <property type="organism name" value="human"/>
</dbReference>
<dbReference type="GeneWiki" id="NFKBIB"/>
<dbReference type="GenomeRNAi" id="4793"/>
<dbReference type="Pharos" id="Q15653">
    <property type="development level" value="Tbio"/>
</dbReference>
<dbReference type="PRO" id="PR:Q15653"/>
<dbReference type="Proteomes" id="UP000005640">
    <property type="component" value="Chromosome 19"/>
</dbReference>
<dbReference type="RNAct" id="Q15653">
    <property type="molecule type" value="protein"/>
</dbReference>
<dbReference type="Bgee" id="ENSG00000104825">
    <property type="expression patterns" value="Expressed in left testis and 101 other cell types or tissues"/>
</dbReference>
<dbReference type="ExpressionAtlas" id="Q15653">
    <property type="expression patterns" value="baseline and differential"/>
</dbReference>
<dbReference type="GO" id="GO:0005829">
    <property type="term" value="C:cytosol"/>
    <property type="evidence" value="ECO:0000304"/>
    <property type="project" value="Reactome"/>
</dbReference>
<dbReference type="GO" id="GO:0005634">
    <property type="term" value="C:nucleus"/>
    <property type="evidence" value="ECO:0007669"/>
    <property type="project" value="UniProtKB-SubCell"/>
</dbReference>
<dbReference type="GO" id="GO:0003713">
    <property type="term" value="F:transcription coactivator activity"/>
    <property type="evidence" value="ECO:0000304"/>
    <property type="project" value="ProtInc"/>
</dbReference>
<dbReference type="GO" id="GO:0071222">
    <property type="term" value="P:cellular response to lipopolysaccharide"/>
    <property type="evidence" value="ECO:0000318"/>
    <property type="project" value="GO_Central"/>
</dbReference>
<dbReference type="GO" id="GO:0006351">
    <property type="term" value="P:DNA-templated transcription"/>
    <property type="evidence" value="ECO:0000304"/>
    <property type="project" value="ProtInc"/>
</dbReference>
<dbReference type="GO" id="GO:0006954">
    <property type="term" value="P:inflammatory response"/>
    <property type="evidence" value="ECO:0007669"/>
    <property type="project" value="Ensembl"/>
</dbReference>
<dbReference type="GO" id="GO:0043122">
    <property type="term" value="P:regulation of canonical NF-kappaB signal transduction"/>
    <property type="evidence" value="ECO:0007669"/>
    <property type="project" value="Ensembl"/>
</dbReference>
<dbReference type="GO" id="GO:0007165">
    <property type="term" value="P:signal transduction"/>
    <property type="evidence" value="ECO:0000304"/>
    <property type="project" value="ProtInc"/>
</dbReference>
<dbReference type="Gene3D" id="1.25.40.20">
    <property type="entry name" value="Ankyrin repeat-containing domain"/>
    <property type="match status" value="1"/>
</dbReference>
<dbReference type="InterPro" id="IPR002110">
    <property type="entry name" value="Ankyrin_rpt"/>
</dbReference>
<dbReference type="InterPro" id="IPR036770">
    <property type="entry name" value="Ankyrin_rpt-contain_sf"/>
</dbReference>
<dbReference type="PANTHER" id="PTHR47303">
    <property type="match status" value="1"/>
</dbReference>
<dbReference type="PANTHER" id="PTHR47303:SF1">
    <property type="entry name" value="NF-KAPPA-B INHIBITOR BETA"/>
    <property type="match status" value="1"/>
</dbReference>
<dbReference type="Pfam" id="PF00023">
    <property type="entry name" value="Ank"/>
    <property type="match status" value="1"/>
</dbReference>
<dbReference type="Pfam" id="PF12796">
    <property type="entry name" value="Ank_2"/>
    <property type="match status" value="1"/>
</dbReference>
<dbReference type="Pfam" id="PF13637">
    <property type="entry name" value="Ank_4"/>
    <property type="match status" value="1"/>
</dbReference>
<dbReference type="PRINTS" id="PR01415">
    <property type="entry name" value="ANKYRIN"/>
</dbReference>
<dbReference type="SMART" id="SM00248">
    <property type="entry name" value="ANK"/>
    <property type="match status" value="6"/>
</dbReference>
<dbReference type="SUPFAM" id="SSF48403">
    <property type="entry name" value="Ankyrin repeat"/>
    <property type="match status" value="1"/>
</dbReference>
<dbReference type="PROSITE" id="PS50297">
    <property type="entry name" value="ANK_REP_REGION"/>
    <property type="match status" value="1"/>
</dbReference>
<dbReference type="PROSITE" id="PS50088">
    <property type="entry name" value="ANK_REPEAT"/>
    <property type="match status" value="4"/>
</dbReference>
<keyword id="KW-0002">3D-structure</keyword>
<keyword id="KW-0025">Alternative splicing</keyword>
<keyword id="KW-0040">ANK repeat</keyword>
<keyword id="KW-0963">Cytoplasm</keyword>
<keyword id="KW-0539">Nucleus</keyword>
<keyword id="KW-0597">Phosphoprotein</keyword>
<keyword id="KW-1267">Proteomics identification</keyword>
<keyword id="KW-1185">Reference proteome</keyword>
<keyword id="KW-0677">Repeat</keyword>
<name>IKBB_HUMAN</name>
<protein>
    <recommendedName>
        <fullName>NF-kappa-B inhibitor beta</fullName>
        <shortName>NF-kappa-BIB</shortName>
    </recommendedName>
    <alternativeName>
        <fullName>I-kappa-B-beta</fullName>
        <shortName>IkB-B</shortName>
        <shortName>IkB-beta</shortName>
        <shortName>IkappaBbeta</shortName>
    </alternativeName>
    <alternativeName>
        <fullName>Thyroid receptor-interacting protein 9</fullName>
        <shortName>TR-interacting protein 9</shortName>
        <shortName>TRIP-9</shortName>
    </alternativeName>
</protein>
<gene>
    <name type="primary">NFKBIB</name>
    <name type="synonym">IKBB</name>
    <name type="synonym">TRIP9</name>
</gene>
<comment type="function">
    <text>Inhibits NF-kappa-B by complexing with and trapping it in the cytoplasm. However, the unphosphorylated form resynthesized after cell stimulation is able to bind NF-kappa-B allowing its transport to the nucleus and protecting it to further NFKBIA-dependent inactivation. Association with inhibitor kappa B-interacting NKIRAS1 and NKIRAS2 prevent its phosphorylation rendering it more resistant to degradation, explaining its slower degradation.</text>
</comment>
<comment type="subunit">
    <text evidence="1 3 4 5 6 7">Interacts with THRB (via ligand-binding domain) (PubMed:7776974). Interacts with RELA and REL (By similarity). Interacts with COMMD1 (PubMed:16573520). Interacts with inhibitor kappa B-interacting Ras-like NKIRAS1 and NKIRAS2 (PubMed:10657303, PubMed:12672800, PubMed:15024091).</text>
</comment>
<comment type="interaction">
    <interactant intactId="EBI-352889">
        <id>Q15653</id>
    </interactant>
    <interactant intactId="EBI-12012762">
        <id>Q96KE9-2</id>
        <label>BTBD6</label>
    </interactant>
    <organismsDiffer>false</organismsDiffer>
    <experiments>3</experiments>
</comment>
<comment type="interaction">
    <interactant intactId="EBI-352889">
        <id>Q15653</id>
    </interactant>
    <interactant intactId="EBI-81249">
        <id>O15111</id>
        <label>CHUK</label>
    </interactant>
    <organismsDiffer>false</organismsDiffer>
    <experiments>2</experiments>
</comment>
<comment type="interaction">
    <interactant intactId="EBI-352889">
        <id>Q15653</id>
    </interactant>
    <interactant intactId="EBI-81266">
        <id>O14920</id>
        <label>IKBKB</label>
    </interactant>
    <organismsDiffer>false</organismsDiffer>
    <experiments>2</experiments>
</comment>
<comment type="interaction">
    <interactant intactId="EBI-352889">
        <id>Q15653</id>
    </interactant>
    <interactant intactId="EBI-81279">
        <id>Q9Y6K9</id>
        <label>IKBKG</label>
    </interactant>
    <organismsDiffer>false</organismsDiffer>
    <experiments>2</experiments>
</comment>
<comment type="interaction">
    <interactant intactId="EBI-352889">
        <id>Q15653</id>
    </interactant>
    <interactant intactId="EBI-307531">
        <id>P23508</id>
        <label>MCC</label>
    </interactant>
    <organismsDiffer>false</organismsDiffer>
    <experiments>4</experiments>
</comment>
<comment type="interaction">
    <interactant intactId="EBI-352889">
        <id>Q15653</id>
    </interactant>
    <interactant intactId="EBI-1246238">
        <id>P17568</id>
        <label>NDUFB7</label>
    </interactant>
    <organismsDiffer>false</organismsDiffer>
    <experiments>3</experiments>
</comment>
<comment type="interaction">
    <interactant intactId="EBI-352889">
        <id>Q15653</id>
    </interactant>
    <interactant intactId="EBI-300010">
        <id>P19838</id>
        <label>NFKB1</label>
    </interactant>
    <organismsDiffer>false</organismsDiffer>
    <experiments>6</experiments>
</comment>
<comment type="interaction">
    <interactant intactId="EBI-352889">
        <id>Q15653</id>
    </interactant>
    <interactant intactId="EBI-307326">
        <id>Q00653</id>
        <label>NFKB2</label>
    </interactant>
    <organismsDiffer>false</organismsDiffer>
    <experiments>3</experiments>
</comment>
<comment type="interaction">
    <interactant intactId="EBI-352889">
        <id>Q15653</id>
    </interactant>
    <interactant intactId="EBI-307386">
        <id>P25963</id>
        <label>NFKBIA</label>
    </interactant>
    <organismsDiffer>false</organismsDiffer>
    <experiments>2</experiments>
</comment>
<comment type="interaction">
    <interactant intactId="EBI-352889">
        <id>Q15653</id>
    </interactant>
    <interactant intactId="EBI-359458">
        <id>Q9GZS1</id>
        <label>POLR1E</label>
    </interactant>
    <organismsDiffer>false</organismsDiffer>
    <experiments>2</experiments>
</comment>
<comment type="interaction">
    <interactant intactId="EBI-352889">
        <id>Q15653</id>
    </interactant>
    <interactant intactId="EBI-359444">
        <id>Q9UJF2</id>
        <label>RASAL2</label>
    </interactant>
    <organismsDiffer>false</organismsDiffer>
    <experiments>2</experiments>
</comment>
<comment type="interaction">
    <interactant intactId="EBI-352889">
        <id>Q15653</id>
    </interactant>
    <interactant intactId="EBI-307352">
        <id>Q04864</id>
        <label>REL</label>
    </interactant>
    <organismsDiffer>false</organismsDiffer>
    <experiments>3</experiments>
</comment>
<comment type="interaction">
    <interactant intactId="EBI-352889">
        <id>Q15653</id>
    </interactant>
    <interactant intactId="EBI-73886">
        <id>Q04206</id>
        <label>RELA</label>
    </interactant>
    <organismsDiffer>false</organismsDiffer>
    <experiments>9</experiments>
</comment>
<comment type="interaction">
    <interactant intactId="EBI-352889">
        <id>Q15653</id>
    </interactant>
    <interactant intactId="EBI-5235340">
        <id>Q7Z699</id>
        <label>SPRED1</label>
    </interactant>
    <organismsDiffer>false</organismsDiffer>
    <experiments>3</experiments>
</comment>
<comment type="interaction">
    <interactant intactId="EBI-352889">
        <id>Q15653</id>
    </interactant>
    <interactant intactId="EBI-2799833">
        <id>Q8N1B4</id>
        <label>VPS52</label>
    </interactant>
    <organismsDiffer>false</organismsDiffer>
    <experiments>3</experiments>
</comment>
<comment type="interaction">
    <interactant intactId="EBI-352889">
        <id>Q15653</id>
    </interactant>
    <interactant intactId="EBI-465733">
        <id>P14340</id>
    </interactant>
    <organismsDiffer>true</organismsDiffer>
    <experiments>2</experiments>
</comment>
<comment type="interaction">
    <interactant intactId="EBI-352889">
        <id>Q15653</id>
    </interactant>
    <interactant intactId="EBI-9825968">
        <id>PRO_0000037965</id>
        <dbReference type="UniProtKB" id="P14340"/>
    </interactant>
    <organismsDiffer>true</organismsDiffer>
    <experiments>2</experiments>
</comment>
<comment type="subcellular location">
    <subcellularLocation>
        <location evidence="1">Cytoplasm</location>
    </subcellularLocation>
    <subcellularLocation>
        <location evidence="1">Nucleus</location>
    </subcellularLocation>
</comment>
<comment type="alternative products">
    <event type="alternative splicing"/>
    <isoform>
        <id>Q15653-1</id>
        <name>1</name>
        <sequence type="displayed"/>
    </isoform>
    <isoform>
        <id>Q15653-2</id>
        <name>2</name>
        <sequence type="described" ref="VSP_012409 VSP_012410"/>
    </isoform>
</comment>
<comment type="tissue specificity">
    <text>Expressed in all tissues examined.</text>
</comment>
<comment type="PTM">
    <text evidence="8 9">Phosphorylated by RPS6KA1; followed by degradation. Interaction with NKIRAS1 and NKIRAS2 probably prevents phosphorylation.</text>
</comment>
<comment type="similarity">
    <text evidence="13">Belongs to the NF-kappa-B inhibitor family.</text>
</comment>
<sequence length="356" mass="37771">MAGVACLGKAADADEWCDSGLGSLGPDAAAPGGPGLGAELGPGLSWAPLVFGYVTEDGDTALHLAVIHQHEPFLDFLLGFSAGTEYMDLQNDLGQTALHLAAILGETSTVEKLYAAGAGLCVAERRGHTALHLACRVGAHACARALLQPRPRRPREAPDTYLAQGPDRTPDTNHTPVALYPDSDLEKEEEESEEDWKLQLEAENYEGHTPLHVAVIHKDVEMVRLLRDAGADLDKPEPTCGRSPLHLAVEAQAADVLELLLRAGANPAARMYGGRTPLGSAMLRPNPILARLLRAHGAPEPEGEDEKSGPCSSSSDSDSGDEGDEYDDIVVHSSRSQTRLPPTPASKPLPDDPRPV</sequence>